<protein>
    <recommendedName>
        <fullName evidence="1">UPF0342 protein SP_1372</fullName>
    </recommendedName>
</protein>
<name>Y1372_STRPN</name>
<keyword id="KW-0002">3D-structure</keyword>
<keyword id="KW-1185">Reference proteome</keyword>
<comment type="similarity">
    <text evidence="1">Belongs to the UPF0342 family.</text>
</comment>
<reference key="1">
    <citation type="journal article" date="2001" name="Science">
        <title>Complete genome sequence of a virulent isolate of Streptococcus pneumoniae.</title>
        <authorList>
            <person name="Tettelin H."/>
            <person name="Nelson K.E."/>
            <person name="Paulsen I.T."/>
            <person name="Eisen J.A."/>
            <person name="Read T.D."/>
            <person name="Peterson S.N."/>
            <person name="Heidelberg J.F."/>
            <person name="DeBoy R.T."/>
            <person name="Haft D.H."/>
            <person name="Dodson R.J."/>
            <person name="Durkin A.S."/>
            <person name="Gwinn M.L."/>
            <person name="Kolonay J.F."/>
            <person name="Nelson W.C."/>
            <person name="Peterson J.D."/>
            <person name="Umayam L.A."/>
            <person name="White O."/>
            <person name="Salzberg S.L."/>
            <person name="Lewis M.R."/>
            <person name="Radune D."/>
            <person name="Holtzapple E.K."/>
            <person name="Khouri H.M."/>
            <person name="Wolf A.M."/>
            <person name="Utterback T.R."/>
            <person name="Hansen C.L."/>
            <person name="McDonald L.A."/>
            <person name="Feldblyum T.V."/>
            <person name="Angiuoli S.V."/>
            <person name="Dickinson T."/>
            <person name="Hickey E.K."/>
            <person name="Holt I.E."/>
            <person name="Loftus B.J."/>
            <person name="Yang F."/>
            <person name="Smith H.O."/>
            <person name="Venter J.C."/>
            <person name="Dougherty B.A."/>
            <person name="Morrison D.A."/>
            <person name="Hollingshead S.K."/>
            <person name="Fraser C.M."/>
        </authorList>
    </citation>
    <scope>NUCLEOTIDE SEQUENCE [LARGE SCALE GENOMIC DNA]</scope>
    <source>
        <strain>ATCC BAA-334 / TIGR4</strain>
    </source>
</reference>
<accession>Q97Q59</accession>
<dbReference type="EMBL" id="AE005672">
    <property type="protein sequence ID" value="AAK75470.1"/>
    <property type="molecule type" value="Genomic_DNA"/>
</dbReference>
<dbReference type="PIR" id="E95159">
    <property type="entry name" value="E95159"/>
</dbReference>
<dbReference type="RefSeq" id="WP_000065987.1">
    <property type="nucleotide sequence ID" value="NZ_CP155539.1"/>
</dbReference>
<dbReference type="PDB" id="2IAZ">
    <property type="method" value="X-ray"/>
    <property type="resolution" value="2.40 A"/>
    <property type="chains" value="A/B/C/D=1-112"/>
</dbReference>
<dbReference type="PDBsum" id="2IAZ"/>
<dbReference type="SMR" id="Q97Q59"/>
<dbReference type="PaxDb" id="170187-SP_1372"/>
<dbReference type="EnsemblBacteria" id="AAK75470">
    <property type="protein sequence ID" value="AAK75470"/>
    <property type="gene ID" value="SP_1372"/>
</dbReference>
<dbReference type="KEGG" id="spn:SP_1372"/>
<dbReference type="eggNOG" id="COG3679">
    <property type="taxonomic scope" value="Bacteria"/>
</dbReference>
<dbReference type="PhylomeDB" id="Q97Q59"/>
<dbReference type="BioCyc" id="SPNE170187:G1FZB-1381-MONOMER"/>
<dbReference type="EvolutionaryTrace" id="Q97Q59"/>
<dbReference type="Proteomes" id="UP000000585">
    <property type="component" value="Chromosome"/>
</dbReference>
<dbReference type="Gene3D" id="1.20.1500.10">
    <property type="entry name" value="YheA/YmcA-like"/>
    <property type="match status" value="1"/>
</dbReference>
<dbReference type="HAMAP" id="MF_01526">
    <property type="entry name" value="UPF0342"/>
    <property type="match status" value="1"/>
</dbReference>
<dbReference type="InterPro" id="IPR010368">
    <property type="entry name" value="Com_YlbF"/>
</dbReference>
<dbReference type="InterPro" id="IPR023378">
    <property type="entry name" value="YheA/YmcA-like_dom_sf"/>
</dbReference>
<dbReference type="NCBIfam" id="NF010209">
    <property type="entry name" value="PRK13676.1-1"/>
    <property type="match status" value="1"/>
</dbReference>
<dbReference type="Pfam" id="PF06133">
    <property type="entry name" value="Com_YlbF"/>
    <property type="match status" value="1"/>
</dbReference>
<dbReference type="SUPFAM" id="SSF158622">
    <property type="entry name" value="YheA/YmcA-like"/>
    <property type="match status" value="1"/>
</dbReference>
<evidence type="ECO:0000255" key="1">
    <source>
        <dbReference type="HAMAP-Rule" id="MF_01526"/>
    </source>
</evidence>
<evidence type="ECO:0007829" key="2">
    <source>
        <dbReference type="PDB" id="2IAZ"/>
    </source>
</evidence>
<proteinExistence type="evidence at protein level"/>
<feature type="chain" id="PRO_0000109994" description="UPF0342 protein SP_1372">
    <location>
        <begin position="1"/>
        <end position="112"/>
    </location>
</feature>
<feature type="helix" evidence="2">
    <location>
        <begin position="1"/>
        <end position="16"/>
    </location>
</feature>
<feature type="helix" evidence="2">
    <location>
        <begin position="19"/>
        <end position="33"/>
    </location>
</feature>
<feature type="helix" evidence="2">
    <location>
        <begin position="35"/>
        <end position="47"/>
    </location>
</feature>
<feature type="helix" evidence="2">
    <location>
        <begin position="48"/>
        <end position="50"/>
    </location>
</feature>
<feature type="turn" evidence="2">
    <location>
        <begin position="51"/>
        <end position="54"/>
    </location>
</feature>
<feature type="helix" evidence="2">
    <location>
        <begin position="63"/>
        <end position="77"/>
    </location>
</feature>
<feature type="helix" evidence="2">
    <location>
        <begin position="80"/>
        <end position="108"/>
    </location>
</feature>
<gene>
    <name type="ordered locus">SP_1372</name>
</gene>
<organism>
    <name type="scientific">Streptococcus pneumoniae serotype 4 (strain ATCC BAA-334 / TIGR4)</name>
    <dbReference type="NCBI Taxonomy" id="170187"/>
    <lineage>
        <taxon>Bacteria</taxon>
        <taxon>Bacillati</taxon>
        <taxon>Bacillota</taxon>
        <taxon>Bacilli</taxon>
        <taxon>Lactobacillales</taxon>
        <taxon>Streptococcaceae</taxon>
        <taxon>Streptococcus</taxon>
    </lineage>
</organism>
<sequence>MSNIYDSANELSRGLRGLPEYKAVKAAKDAIAADAEASKIFTDYLAFQEEIQKLAQTGQMPDASFQAKMEGFGKQIQGNSLLSEFFTKQQQLAIYLSDIEKIVFEPVSELLK</sequence>